<reference key="1">
    <citation type="journal article" date="2003" name="Mol. Microbiol.">
        <title>An integrated analysis of the genome of the hyperthermophilic archaeon Pyrococcus abyssi.</title>
        <authorList>
            <person name="Cohen G.N."/>
            <person name="Barbe V."/>
            <person name="Flament D."/>
            <person name="Galperin M."/>
            <person name="Heilig R."/>
            <person name="Lecompte O."/>
            <person name="Poch O."/>
            <person name="Prieur D."/>
            <person name="Querellou J."/>
            <person name="Ripp R."/>
            <person name="Thierry J.-C."/>
            <person name="Van der Oost J."/>
            <person name="Weissenbach J."/>
            <person name="Zivanovic Y."/>
            <person name="Forterre P."/>
        </authorList>
    </citation>
    <scope>NUCLEOTIDE SEQUENCE [LARGE SCALE GENOMIC DNA]</scope>
    <source>
        <strain>GE5 / Orsay</strain>
    </source>
</reference>
<reference key="2">
    <citation type="journal article" date="2012" name="Curr. Microbiol.">
        <title>Re-annotation of two hyperthermophilic archaea Pyrococcus abyssi GE5 and Pyrococcus furiosus DSM 3638.</title>
        <authorList>
            <person name="Gao J."/>
            <person name="Wang J."/>
        </authorList>
    </citation>
    <scope>GENOME REANNOTATION</scope>
    <source>
        <strain>GE5 / Orsay</strain>
    </source>
</reference>
<keyword id="KW-0066">ATP synthesis</keyword>
<keyword id="KW-0067">ATP-binding</keyword>
<keyword id="KW-0068">Autocatalytic cleavage</keyword>
<keyword id="KW-1003">Cell membrane</keyword>
<keyword id="KW-0375">Hydrogen ion transport</keyword>
<keyword id="KW-0406">Ion transport</keyword>
<keyword id="KW-0472">Membrane</keyword>
<keyword id="KW-0547">Nucleotide-binding</keyword>
<keyword id="KW-0651">Protein splicing</keyword>
<keyword id="KW-1278">Translocase</keyword>
<keyword id="KW-0813">Transport</keyword>
<gene>
    <name evidence="2" type="primary">atpA</name>
    <name type="ordered locus">PYRAB17610</name>
    <name type="ORF">PAB2378</name>
</gene>
<comment type="function">
    <text evidence="2">Component of the A-type ATP synthase that produces ATP from ADP in the presence of a proton gradient across the membrane. The A chain is the catalytic subunit.</text>
</comment>
<comment type="catalytic activity">
    <reaction evidence="2">
        <text>ATP + H2O + 4 H(+)(in) = ADP + phosphate + 5 H(+)(out)</text>
        <dbReference type="Rhea" id="RHEA:57720"/>
        <dbReference type="ChEBI" id="CHEBI:15377"/>
        <dbReference type="ChEBI" id="CHEBI:15378"/>
        <dbReference type="ChEBI" id="CHEBI:30616"/>
        <dbReference type="ChEBI" id="CHEBI:43474"/>
        <dbReference type="ChEBI" id="CHEBI:456216"/>
        <dbReference type="EC" id="7.1.2.2"/>
    </reaction>
</comment>
<comment type="subunit">
    <text evidence="2">Has multiple subunits with at least A(3), B(3), C, D, E, F, H, I and proteolipid K(x).</text>
</comment>
<comment type="subcellular location">
    <subcellularLocation>
        <location evidence="2">Cell membrane</location>
        <topology evidence="2">Peripheral membrane protein</topology>
    </subcellularLocation>
</comment>
<comment type="PTM">
    <text evidence="3">This protein undergoes a protein self splicing that involves a post-translational excision of the VDE intervening region (intein) followed by peptide ligation.</text>
</comment>
<comment type="miscellaneous">
    <text>The intein interrupts the ATP-binding site.</text>
</comment>
<comment type="similarity">
    <text evidence="2">Belongs to the ATPase alpha/beta chains family.</text>
</comment>
<feature type="chain" id="PRO_0000002461" description="A-type ATP synthase subunit A, 1st part" evidence="1">
    <location>
        <begin position="1"/>
        <end position="240"/>
    </location>
</feature>
<feature type="chain" id="PRO_0000002462" description="Pab AtpA intein" evidence="1">
    <location>
        <begin position="241"/>
        <end position="669"/>
    </location>
</feature>
<feature type="chain" id="PRO_0000002463" description="A-type ATP synthase subunit A, 2nd part" evidence="1">
    <location>
        <begin position="670"/>
        <end position="1017"/>
    </location>
</feature>
<feature type="domain" description="DOD-type homing endonuclease">
    <location>
        <begin position="396"/>
        <end position="529"/>
    </location>
</feature>
<evidence type="ECO:0000255" key="1"/>
<evidence type="ECO:0000255" key="2">
    <source>
        <dbReference type="HAMAP-Rule" id="MF_00309"/>
    </source>
</evidence>
<evidence type="ECO:0000305" key="3"/>
<proteinExistence type="inferred from homology"/>
<protein>
    <recommendedName>
        <fullName evidence="2">A-type ATP synthase subunit A</fullName>
        <ecNumber evidence="2">7.1.2.2</ecNumber>
    </recommendedName>
    <component>
        <recommendedName>
            <fullName>Pab AtpA intein</fullName>
        </recommendedName>
        <alternativeName>
            <fullName>Pab VMA intein</fullName>
        </alternativeName>
    </component>
</protein>
<organism>
    <name type="scientific">Pyrococcus abyssi (strain GE5 / Orsay)</name>
    <dbReference type="NCBI Taxonomy" id="272844"/>
    <lineage>
        <taxon>Archaea</taxon>
        <taxon>Methanobacteriati</taxon>
        <taxon>Methanobacteriota</taxon>
        <taxon>Thermococci</taxon>
        <taxon>Thermococcales</taxon>
        <taxon>Thermococcaceae</taxon>
        <taxon>Pyrococcus</taxon>
    </lineage>
</organism>
<name>AATA_PYRAB</name>
<accession>Q9UXU7</accession>
<accession>G8ZKU4</accession>
<dbReference type="EC" id="7.1.2.2" evidence="2"/>
<dbReference type="EMBL" id="AJ248288">
    <property type="protein sequence ID" value="CAB50666.1"/>
    <property type="molecule type" value="Genomic_DNA"/>
</dbReference>
<dbReference type="EMBL" id="HE613800">
    <property type="protein sequence ID" value="CCE71235.1"/>
    <property type="molecule type" value="Genomic_DNA"/>
</dbReference>
<dbReference type="PIR" id="D75028">
    <property type="entry name" value="D75028"/>
</dbReference>
<dbReference type="RefSeq" id="WP_010868880.1">
    <property type="nucleotide sequence ID" value="NC_000868.1"/>
</dbReference>
<dbReference type="SMR" id="Q9UXU7"/>
<dbReference type="STRING" id="272844.PAB2378"/>
<dbReference type="KEGG" id="pab:PAB2378"/>
<dbReference type="PATRIC" id="fig|272844.11.peg.1880"/>
<dbReference type="eggNOG" id="arCOG00868">
    <property type="taxonomic scope" value="Archaea"/>
</dbReference>
<dbReference type="eggNOG" id="arCOG03154">
    <property type="taxonomic scope" value="Archaea"/>
</dbReference>
<dbReference type="HOGENOM" id="CLU_008162_1_0_2"/>
<dbReference type="OrthoDB" id="115235at2157"/>
<dbReference type="PhylomeDB" id="Q9UXU7"/>
<dbReference type="Proteomes" id="UP000000810">
    <property type="component" value="Chromosome"/>
</dbReference>
<dbReference type="Proteomes" id="UP000009139">
    <property type="component" value="Chromosome"/>
</dbReference>
<dbReference type="GO" id="GO:0005886">
    <property type="term" value="C:plasma membrane"/>
    <property type="evidence" value="ECO:0007669"/>
    <property type="project" value="UniProtKB-SubCell"/>
</dbReference>
<dbReference type="GO" id="GO:0005524">
    <property type="term" value="F:ATP binding"/>
    <property type="evidence" value="ECO:0007669"/>
    <property type="project" value="UniProtKB-UniRule"/>
</dbReference>
<dbReference type="GO" id="GO:0004519">
    <property type="term" value="F:endonuclease activity"/>
    <property type="evidence" value="ECO:0007669"/>
    <property type="project" value="InterPro"/>
</dbReference>
<dbReference type="GO" id="GO:0046933">
    <property type="term" value="F:proton-transporting ATP synthase activity, rotational mechanism"/>
    <property type="evidence" value="ECO:0007669"/>
    <property type="project" value="UniProtKB-UniRule"/>
</dbReference>
<dbReference type="GO" id="GO:0046961">
    <property type="term" value="F:proton-transporting ATPase activity, rotational mechanism"/>
    <property type="evidence" value="ECO:0007669"/>
    <property type="project" value="InterPro"/>
</dbReference>
<dbReference type="GO" id="GO:0016539">
    <property type="term" value="P:intein-mediated protein splicing"/>
    <property type="evidence" value="ECO:0007669"/>
    <property type="project" value="InterPro"/>
</dbReference>
<dbReference type="GO" id="GO:0042777">
    <property type="term" value="P:proton motive force-driven plasma membrane ATP synthesis"/>
    <property type="evidence" value="ECO:0007669"/>
    <property type="project" value="UniProtKB-UniRule"/>
</dbReference>
<dbReference type="CDD" id="cd18111">
    <property type="entry name" value="ATP-synt_V_A-type_alpha_C"/>
    <property type="match status" value="1"/>
</dbReference>
<dbReference type="CDD" id="cd18119">
    <property type="entry name" value="ATP-synt_V_A-type_alpha_N"/>
    <property type="match status" value="1"/>
</dbReference>
<dbReference type="CDD" id="cd00081">
    <property type="entry name" value="Hint"/>
    <property type="match status" value="1"/>
</dbReference>
<dbReference type="CDD" id="cd01134">
    <property type="entry name" value="V_A-ATPase_A"/>
    <property type="match status" value="1"/>
</dbReference>
<dbReference type="FunFam" id="1.10.1140.10:FF:000002">
    <property type="entry name" value="V-type proton ATPase catalytic subunit A"/>
    <property type="match status" value="1"/>
</dbReference>
<dbReference type="FunFam" id="2.40.30.20:FF:000002">
    <property type="entry name" value="V-type proton ATPase catalytic subunit A"/>
    <property type="match status" value="1"/>
</dbReference>
<dbReference type="FunFam" id="2.40.50.100:FF:000008">
    <property type="entry name" value="V-type proton ATPase catalytic subunit A"/>
    <property type="match status" value="1"/>
</dbReference>
<dbReference type="Gene3D" id="2.40.30.20">
    <property type="match status" value="1"/>
</dbReference>
<dbReference type="Gene3D" id="2.40.50.100">
    <property type="match status" value="1"/>
</dbReference>
<dbReference type="Gene3D" id="1.10.1140.10">
    <property type="entry name" value="Bovine Mitochondrial F1-atpase, Atp Synthase Beta Chain, Chain D, domain 3"/>
    <property type="match status" value="1"/>
</dbReference>
<dbReference type="Gene3D" id="2.170.16.10">
    <property type="entry name" value="Hedgehog/Intein (Hint) domain"/>
    <property type="match status" value="2"/>
</dbReference>
<dbReference type="Gene3D" id="3.10.28.10">
    <property type="entry name" value="Homing endonucleases"/>
    <property type="match status" value="1"/>
</dbReference>
<dbReference type="Gene3D" id="3.40.50.300">
    <property type="entry name" value="P-loop containing nucleotide triphosphate hydrolases"/>
    <property type="match status" value="1"/>
</dbReference>
<dbReference type="HAMAP" id="MF_00309">
    <property type="entry name" value="ATP_synth_A_arch"/>
    <property type="match status" value="1"/>
</dbReference>
<dbReference type="InterPro" id="IPR055190">
    <property type="entry name" value="ATP-synt_VA_C"/>
</dbReference>
<dbReference type="InterPro" id="IPR031686">
    <property type="entry name" value="ATP-synth_a_Xtn"/>
</dbReference>
<dbReference type="InterPro" id="IPR023366">
    <property type="entry name" value="ATP_synth_asu-like_sf"/>
</dbReference>
<dbReference type="InterPro" id="IPR020003">
    <property type="entry name" value="ATPase_a/bsu_AS"/>
</dbReference>
<dbReference type="InterPro" id="IPR004100">
    <property type="entry name" value="ATPase_F1/V1/A1_a/bsu_N"/>
</dbReference>
<dbReference type="InterPro" id="IPR036121">
    <property type="entry name" value="ATPase_F1/V1/A1_a/bsu_N_sf"/>
</dbReference>
<dbReference type="InterPro" id="IPR000194">
    <property type="entry name" value="ATPase_F1/V1/A1_a/bsu_nucl-bd"/>
</dbReference>
<dbReference type="InterPro" id="IPR024034">
    <property type="entry name" value="ATPase_F1/V1_b/a_C"/>
</dbReference>
<dbReference type="InterPro" id="IPR003586">
    <property type="entry name" value="Hint_dom_C"/>
</dbReference>
<dbReference type="InterPro" id="IPR003587">
    <property type="entry name" value="Hint_dom_N"/>
</dbReference>
<dbReference type="InterPro" id="IPR036844">
    <property type="entry name" value="Hint_dom_sf"/>
</dbReference>
<dbReference type="InterPro" id="IPR027434">
    <property type="entry name" value="Homing_endonucl"/>
</dbReference>
<dbReference type="InterPro" id="IPR006142">
    <property type="entry name" value="INTEIN"/>
</dbReference>
<dbReference type="InterPro" id="IPR030934">
    <property type="entry name" value="Intein_C"/>
</dbReference>
<dbReference type="InterPro" id="IPR004042">
    <property type="entry name" value="Intein_endonuc_central"/>
</dbReference>
<dbReference type="InterPro" id="IPR006141">
    <property type="entry name" value="Intein_N"/>
</dbReference>
<dbReference type="InterPro" id="IPR004860">
    <property type="entry name" value="LAGLIDADG_dom"/>
</dbReference>
<dbReference type="InterPro" id="IPR027417">
    <property type="entry name" value="P-loop_NTPase"/>
</dbReference>
<dbReference type="InterPro" id="IPR022878">
    <property type="entry name" value="V-ATPase_asu"/>
</dbReference>
<dbReference type="NCBIfam" id="TIGR01443">
    <property type="entry name" value="intein_Cterm"/>
    <property type="match status" value="1"/>
</dbReference>
<dbReference type="NCBIfam" id="TIGR01445">
    <property type="entry name" value="intein_Nterm"/>
    <property type="match status" value="1"/>
</dbReference>
<dbReference type="NCBIfam" id="NF003220">
    <property type="entry name" value="PRK04192.1"/>
    <property type="match status" value="1"/>
</dbReference>
<dbReference type="NCBIfam" id="NF011287">
    <property type="entry name" value="PRK14698.1"/>
    <property type="match status" value="1"/>
</dbReference>
<dbReference type="PANTHER" id="PTHR43607:SF1">
    <property type="entry name" value="H(+)-TRANSPORTING TWO-SECTOR ATPASE"/>
    <property type="match status" value="1"/>
</dbReference>
<dbReference type="PANTHER" id="PTHR43607">
    <property type="entry name" value="V-TYPE PROTON ATPASE CATALYTIC SUBUNIT A"/>
    <property type="match status" value="1"/>
</dbReference>
<dbReference type="Pfam" id="PF00006">
    <property type="entry name" value="ATP-synt_ab"/>
    <property type="match status" value="1"/>
</dbReference>
<dbReference type="Pfam" id="PF02874">
    <property type="entry name" value="ATP-synt_ab_N"/>
    <property type="match status" value="1"/>
</dbReference>
<dbReference type="Pfam" id="PF16886">
    <property type="entry name" value="ATP-synt_ab_Xtn"/>
    <property type="match status" value="1"/>
</dbReference>
<dbReference type="Pfam" id="PF22919">
    <property type="entry name" value="ATP-synt_VA_C"/>
    <property type="match status" value="1"/>
</dbReference>
<dbReference type="Pfam" id="PF14890">
    <property type="entry name" value="Intein_splicing"/>
    <property type="match status" value="1"/>
</dbReference>
<dbReference type="Pfam" id="PF14528">
    <property type="entry name" value="LAGLIDADG_3"/>
    <property type="match status" value="2"/>
</dbReference>
<dbReference type="PRINTS" id="PR00379">
    <property type="entry name" value="INTEIN"/>
</dbReference>
<dbReference type="SMART" id="SM00305">
    <property type="entry name" value="HintC"/>
    <property type="match status" value="1"/>
</dbReference>
<dbReference type="SMART" id="SM00306">
    <property type="entry name" value="HintN"/>
    <property type="match status" value="1"/>
</dbReference>
<dbReference type="SUPFAM" id="SSF47917">
    <property type="entry name" value="C-terminal domain of alpha and beta subunits of F1 ATP synthase"/>
    <property type="match status" value="1"/>
</dbReference>
<dbReference type="SUPFAM" id="SSF51294">
    <property type="entry name" value="Hedgehog/intein (Hint) domain"/>
    <property type="match status" value="1"/>
</dbReference>
<dbReference type="SUPFAM" id="SSF55608">
    <property type="entry name" value="Homing endonucleases"/>
    <property type="match status" value="1"/>
</dbReference>
<dbReference type="SUPFAM" id="SSF50615">
    <property type="entry name" value="N-terminal domain of alpha and beta subunits of F1 ATP synthase"/>
    <property type="match status" value="1"/>
</dbReference>
<dbReference type="SUPFAM" id="SSF52540">
    <property type="entry name" value="P-loop containing nucleoside triphosphate hydrolases"/>
    <property type="match status" value="2"/>
</dbReference>
<dbReference type="PROSITE" id="PS00152">
    <property type="entry name" value="ATPASE_ALPHA_BETA"/>
    <property type="match status" value="1"/>
</dbReference>
<dbReference type="PROSITE" id="PS50818">
    <property type="entry name" value="INTEIN_C_TER"/>
    <property type="match status" value="1"/>
</dbReference>
<dbReference type="PROSITE" id="PS50819">
    <property type="entry name" value="INTEIN_ENDONUCLEASE"/>
    <property type="match status" value="1"/>
</dbReference>
<dbReference type="PROSITE" id="PS50817">
    <property type="entry name" value="INTEIN_N_TER"/>
    <property type="match status" value="1"/>
</dbReference>
<sequence length="1017" mass="114354">MVAKGRIIRVTGPLVVADGMKGAKMYEVVRVGELGLIGEIIRLEGDKAVIQVYEETAGVRPGEPVIGTGSSLSVELGPGLLTSIYDGIQRPLEVIREKTGDFIARGVTAPALPRDKKWHFIPKVKVGDKVVGGDIIGEVPETSIITHKIMVPPGIEGEIVEIAEEGEYTIEEVIAKVKTPSGEIKELKMYQRWPVRVKRPYKEKLPPEVPLITGQRVIDTFFPQAKGGTAAIPGPFGSGKCVDGDTLVLTKEFGLIKIKDLYKILDGKGKKTVNGNEEWTELERPITLYGYKDGKIVEIKATHVYKGFSAGMIEIRTRTGRKIKVTPIHKLFTGRVTKNGLEIREVMAKDLKKGDRIIVAKKIDGGERVKLNIRVEQKRGKKIRIPDVLDEKLAEFLGYLIADGTLKPRTVAIYNNDESLLRRANELANELFNIEGKIVKGRTVKALLIHSKALVEFFSKLGVPRNKKARTWKVPKELLISEPEVVKAFIKAYIMCDGYYDENKGEIEIVTASEEAAYGFSYLLAKLGIYAIIREKIIGDKVYYRVVISGESNLEKLGIERVGRGYTSYDIVPVEVEELYNALGRPYAELKRAGIEIHNYLSGENMSYEMFRKFAKFVGMEEIAENHLTHVLFDEIVEIRYISEGQEVYDVTTETHNFIGGNMPTLLHNTVTQHQLAKWSDAQVVIYIGCGERGNEMTDVLEEFPKLKDPKTGKPLMERTVLIANTSNMPVAAREASIYTGITIAEYFRDMGYDVALMADSTSRWAEALREISGRLEEMPGEEGYPAYLASKLAEFYERAGRVVTLGSDYRVGSVSVIGAVSPPGGDFSEPVVQNTLRVVKVFWALDADLARRRHFPAINWLTSYSLYVDAVKDWWHKNVDPEWKAMRDKAMELLQKESELQEIVRIVGPDALPERERAILLVARMLREDYLQQDAFDEVDTYCPPEKQVTMMRVLLNFYDKTMEAISRGVPLEEIAKLPVREEIGRMKFEPDVGKIKALIDKTNEQFEELFKKYGA</sequence>